<dbReference type="PIR" id="F25866">
    <property type="entry name" value="F25866"/>
</dbReference>
<dbReference type="SMR" id="P10458"/>
<dbReference type="GO" id="GO:0005576">
    <property type="term" value="C:extracellular region"/>
    <property type="evidence" value="ECO:0007669"/>
    <property type="project" value="UniProtKB-SubCell"/>
</dbReference>
<dbReference type="GO" id="GO:0030550">
    <property type="term" value="F:acetylcholine receptor inhibitor activity"/>
    <property type="evidence" value="ECO:0007669"/>
    <property type="project" value="UniProtKB-KW"/>
</dbReference>
<dbReference type="GO" id="GO:0099106">
    <property type="term" value="F:ion channel regulator activity"/>
    <property type="evidence" value="ECO:0007669"/>
    <property type="project" value="UniProtKB-KW"/>
</dbReference>
<dbReference type="GO" id="GO:0090729">
    <property type="term" value="F:toxin activity"/>
    <property type="evidence" value="ECO:0007669"/>
    <property type="project" value="UniProtKB-KW"/>
</dbReference>
<dbReference type="CDD" id="cd00206">
    <property type="entry name" value="TFP_snake_toxin"/>
    <property type="match status" value="1"/>
</dbReference>
<dbReference type="FunFam" id="2.10.60.10:FF:000024">
    <property type="entry name" value="Cytotoxin 1"/>
    <property type="match status" value="1"/>
</dbReference>
<dbReference type="Gene3D" id="2.10.60.10">
    <property type="entry name" value="CD59"/>
    <property type="match status" value="1"/>
</dbReference>
<dbReference type="InterPro" id="IPR003571">
    <property type="entry name" value="Snake_3FTx"/>
</dbReference>
<dbReference type="InterPro" id="IPR045860">
    <property type="entry name" value="Snake_toxin-like_sf"/>
</dbReference>
<dbReference type="InterPro" id="IPR018354">
    <property type="entry name" value="Snake_toxin_con_site"/>
</dbReference>
<dbReference type="InterPro" id="IPR054131">
    <property type="entry name" value="Toxin_cobra-type"/>
</dbReference>
<dbReference type="Pfam" id="PF21947">
    <property type="entry name" value="Toxin_cobra-type"/>
    <property type="match status" value="1"/>
</dbReference>
<dbReference type="SUPFAM" id="SSF57302">
    <property type="entry name" value="Snake toxin-like"/>
    <property type="match status" value="1"/>
</dbReference>
<dbReference type="PROSITE" id="PS00272">
    <property type="entry name" value="SNAKE_TOXIN"/>
    <property type="match status" value="1"/>
</dbReference>
<feature type="chain" id="PRO_0000093589" description="Short neurotoxin C" evidence="3">
    <location>
        <begin position="1"/>
        <end position="62"/>
    </location>
</feature>
<feature type="region of interest" description="Disordered" evidence="2">
    <location>
        <begin position="1"/>
        <end position="21"/>
    </location>
</feature>
<feature type="compositionally biased region" description="Polar residues" evidence="2">
    <location>
        <begin position="1"/>
        <end position="16"/>
    </location>
</feature>
<feature type="disulfide bond" evidence="1">
    <location>
        <begin position="3"/>
        <end position="24"/>
    </location>
</feature>
<feature type="disulfide bond" evidence="1">
    <location>
        <begin position="17"/>
        <end position="41"/>
    </location>
</feature>
<feature type="disulfide bond" evidence="1">
    <location>
        <begin position="43"/>
        <end position="54"/>
    </location>
</feature>
<feature type="disulfide bond" evidence="1">
    <location>
        <begin position="55"/>
        <end position="60"/>
    </location>
</feature>
<proteinExistence type="evidence at protein level"/>
<organism>
    <name type="scientific">Laticauda crockeri</name>
    <name type="common">Crocker's sea snake</name>
    <name type="synonym">Rennell Island sea krait</name>
    <dbReference type="NCBI Taxonomy" id="8629"/>
    <lineage>
        <taxon>Eukaryota</taxon>
        <taxon>Metazoa</taxon>
        <taxon>Chordata</taxon>
        <taxon>Craniata</taxon>
        <taxon>Vertebrata</taxon>
        <taxon>Euteleostomi</taxon>
        <taxon>Lepidosauria</taxon>
        <taxon>Squamata</taxon>
        <taxon>Bifurcata</taxon>
        <taxon>Unidentata</taxon>
        <taxon>Episquamata</taxon>
        <taxon>Toxicofera</taxon>
        <taxon>Serpentes</taxon>
        <taxon>Colubroidea</taxon>
        <taxon>Elapidae</taxon>
        <taxon>Laticaudinae</taxon>
        <taxon>Laticauda</taxon>
    </lineage>
</organism>
<reference key="1">
    <citation type="journal article" date="1986" name="Biochemistry">
        <title>Stopped-flow fluorescence studies on binding kinetics of neurotoxins with acetylcholine receptor.</title>
        <authorList>
            <person name="Endo T."/>
            <person name="Nakanishi M."/>
            <person name="Furukawa S."/>
            <person name="Joubert F.J."/>
            <person name="Tamiya N."/>
            <person name="Hayashi K."/>
        </authorList>
    </citation>
    <scope>PROTEIN SEQUENCE</scope>
    <scope>SUBCELLULAR LOCATION</scope>
    <source>
        <tissue>Venom</tissue>
    </source>
</reference>
<name>3S1C_LATCR</name>
<accession>P10458</accession>
<evidence type="ECO:0000250" key="1">
    <source>
        <dbReference type="UniProtKB" id="P0C1Z0"/>
    </source>
</evidence>
<evidence type="ECO:0000256" key="2">
    <source>
        <dbReference type="SAM" id="MobiDB-lite"/>
    </source>
</evidence>
<evidence type="ECO:0000269" key="3">
    <source>
    </source>
</evidence>
<evidence type="ECO:0000305" key="4"/>
<keyword id="KW-0008">Acetylcholine receptor inhibiting toxin</keyword>
<keyword id="KW-0903">Direct protein sequencing</keyword>
<keyword id="KW-1015">Disulfide bond</keyword>
<keyword id="KW-0872">Ion channel impairing toxin</keyword>
<keyword id="KW-0528">Neurotoxin</keyword>
<keyword id="KW-0629">Postsynaptic neurotoxin</keyword>
<keyword id="KW-0964">Secreted</keyword>
<keyword id="KW-0800">Toxin</keyword>
<sequence>RRCFNQQSSQPQTNKSCPPGENSCYRKQWRDHRGTIIERGCGCPTVKPGIKLRCCQSEDCNN</sequence>
<protein>
    <recommendedName>
        <fullName>Short neurotoxin C</fullName>
    </recommendedName>
</protein>
<comment type="function">
    <text>Binds to muscle nicotinic acetylcholine receptor (nAChR) and inhibit acetylcholine from binding to the receptor, thereby impairing neuromuscular transmission.</text>
</comment>
<comment type="subcellular location">
    <subcellularLocation>
        <location evidence="3">Secreted</location>
    </subcellularLocation>
</comment>
<comment type="tissue specificity">
    <text evidence="4">Expressed by the venom gland.</text>
</comment>
<comment type="similarity">
    <text evidence="4">Belongs to the three-finger toxin family. Short-chain subfamily. Type I alpha-neurotoxin sub-subfamily.</text>
</comment>